<reference key="1">
    <citation type="journal article" date="2005" name="Proc. Natl. Acad. Sci. U.S.A.">
        <title>Genome analysis of multiple pathogenic isolates of Streptococcus agalactiae: implications for the microbial 'pan-genome'.</title>
        <authorList>
            <person name="Tettelin H."/>
            <person name="Masignani V."/>
            <person name="Cieslewicz M.J."/>
            <person name="Donati C."/>
            <person name="Medini D."/>
            <person name="Ward N.L."/>
            <person name="Angiuoli S.V."/>
            <person name="Crabtree J."/>
            <person name="Jones A.L."/>
            <person name="Durkin A.S."/>
            <person name="DeBoy R.T."/>
            <person name="Davidsen T.M."/>
            <person name="Mora M."/>
            <person name="Scarselli M."/>
            <person name="Margarit y Ros I."/>
            <person name="Peterson J.D."/>
            <person name="Hauser C.R."/>
            <person name="Sundaram J.P."/>
            <person name="Nelson W.C."/>
            <person name="Madupu R."/>
            <person name="Brinkac L.M."/>
            <person name="Dodson R.J."/>
            <person name="Rosovitz M.J."/>
            <person name="Sullivan S.A."/>
            <person name="Daugherty S.C."/>
            <person name="Haft D.H."/>
            <person name="Selengut J."/>
            <person name="Gwinn M.L."/>
            <person name="Zhou L."/>
            <person name="Zafar N."/>
            <person name="Khouri H."/>
            <person name="Radune D."/>
            <person name="Dimitrov G."/>
            <person name="Watkins K."/>
            <person name="O'Connor K.J."/>
            <person name="Smith S."/>
            <person name="Utterback T.R."/>
            <person name="White O."/>
            <person name="Rubens C.E."/>
            <person name="Grandi G."/>
            <person name="Madoff L.C."/>
            <person name="Kasper D.L."/>
            <person name="Telford J.L."/>
            <person name="Wessels M.R."/>
            <person name="Rappuoli R."/>
            <person name="Fraser C.M."/>
        </authorList>
    </citation>
    <scope>NUCLEOTIDE SEQUENCE [LARGE SCALE GENOMIC DNA]</scope>
    <source>
        <strain>ATCC 27591 / A909 / CDC SS700</strain>
    </source>
</reference>
<sequence length="139" mass="15599">MRIMGLDVGSKTVGVAISDPLGFTAQGLEIIKIDEESGNFGFDRLAELVKEYKVDKFVVGLPKNMNNTSGPRVEASQAYGDKITELFNLPVEYQDERLTTVQAERMLVEQADISRGKRKKVIDKLAAQLILQNYLDRMF</sequence>
<keyword id="KW-0963">Cytoplasm</keyword>
<keyword id="KW-0378">Hydrolase</keyword>
<keyword id="KW-0540">Nuclease</keyword>
<keyword id="KW-0690">Ribosome biogenesis</keyword>
<dbReference type="EC" id="3.1.-.-" evidence="1"/>
<dbReference type="EMBL" id="CP000114">
    <property type="protein sequence ID" value="ABA46110.1"/>
    <property type="status" value="ALT_INIT"/>
    <property type="molecule type" value="Genomic_DNA"/>
</dbReference>
<dbReference type="SMR" id="Q3JYN4"/>
<dbReference type="KEGG" id="sak:SAK_2029"/>
<dbReference type="HOGENOM" id="CLU_098240_2_0_9"/>
<dbReference type="GO" id="GO:0005829">
    <property type="term" value="C:cytosol"/>
    <property type="evidence" value="ECO:0007669"/>
    <property type="project" value="TreeGrafter"/>
</dbReference>
<dbReference type="GO" id="GO:0004518">
    <property type="term" value="F:nuclease activity"/>
    <property type="evidence" value="ECO:0007669"/>
    <property type="project" value="UniProtKB-KW"/>
</dbReference>
<dbReference type="GO" id="GO:0000967">
    <property type="term" value="P:rRNA 5'-end processing"/>
    <property type="evidence" value="ECO:0007669"/>
    <property type="project" value="UniProtKB-UniRule"/>
</dbReference>
<dbReference type="CDD" id="cd16964">
    <property type="entry name" value="YqgF"/>
    <property type="match status" value="1"/>
</dbReference>
<dbReference type="FunFam" id="3.30.420.140:FF:000003">
    <property type="entry name" value="Putative pre-16S rRNA nuclease"/>
    <property type="match status" value="1"/>
</dbReference>
<dbReference type="Gene3D" id="3.30.420.140">
    <property type="entry name" value="YqgF/RNase H-like domain"/>
    <property type="match status" value="1"/>
</dbReference>
<dbReference type="HAMAP" id="MF_00651">
    <property type="entry name" value="Nuclease_YqgF"/>
    <property type="match status" value="1"/>
</dbReference>
<dbReference type="InterPro" id="IPR012337">
    <property type="entry name" value="RNaseH-like_sf"/>
</dbReference>
<dbReference type="InterPro" id="IPR005227">
    <property type="entry name" value="YqgF"/>
</dbReference>
<dbReference type="InterPro" id="IPR006641">
    <property type="entry name" value="YqgF/RNaseH-like_dom"/>
</dbReference>
<dbReference type="InterPro" id="IPR037027">
    <property type="entry name" value="YqgF/RNaseH-like_dom_sf"/>
</dbReference>
<dbReference type="NCBIfam" id="TIGR00250">
    <property type="entry name" value="RNAse_H_YqgF"/>
    <property type="match status" value="1"/>
</dbReference>
<dbReference type="PANTHER" id="PTHR33317">
    <property type="entry name" value="POLYNUCLEOTIDYL TRANSFERASE, RIBONUCLEASE H-LIKE SUPERFAMILY PROTEIN"/>
    <property type="match status" value="1"/>
</dbReference>
<dbReference type="PANTHER" id="PTHR33317:SF4">
    <property type="entry name" value="POLYNUCLEOTIDYL TRANSFERASE, RIBONUCLEASE H-LIKE SUPERFAMILY PROTEIN"/>
    <property type="match status" value="1"/>
</dbReference>
<dbReference type="Pfam" id="PF03652">
    <property type="entry name" value="RuvX"/>
    <property type="match status" value="1"/>
</dbReference>
<dbReference type="SMART" id="SM00732">
    <property type="entry name" value="YqgFc"/>
    <property type="match status" value="1"/>
</dbReference>
<dbReference type="SUPFAM" id="SSF53098">
    <property type="entry name" value="Ribonuclease H-like"/>
    <property type="match status" value="1"/>
</dbReference>
<feature type="chain" id="PRO_0000257599" description="Putative pre-16S rRNA nuclease">
    <location>
        <begin position="1"/>
        <end position="139"/>
    </location>
</feature>
<comment type="function">
    <text evidence="1">Could be a nuclease involved in processing of the 5'-end of pre-16S rRNA.</text>
</comment>
<comment type="subcellular location">
    <subcellularLocation>
        <location evidence="1">Cytoplasm</location>
    </subcellularLocation>
</comment>
<comment type="similarity">
    <text evidence="1">Belongs to the YqgF nuclease family.</text>
</comment>
<comment type="sequence caution" evidence="2">
    <conflict type="erroneous initiation">
        <sequence resource="EMBL-CDS" id="ABA46110"/>
    </conflict>
    <text>Truncated N-terminus.</text>
</comment>
<gene>
    <name type="ordered locus">SAK_2029</name>
</gene>
<organism>
    <name type="scientific">Streptococcus agalactiae serotype Ia (strain ATCC 27591 / A909 / CDC SS700)</name>
    <dbReference type="NCBI Taxonomy" id="205921"/>
    <lineage>
        <taxon>Bacteria</taxon>
        <taxon>Bacillati</taxon>
        <taxon>Bacillota</taxon>
        <taxon>Bacilli</taxon>
        <taxon>Lactobacillales</taxon>
        <taxon>Streptococcaceae</taxon>
        <taxon>Streptococcus</taxon>
    </lineage>
</organism>
<protein>
    <recommendedName>
        <fullName evidence="1">Putative pre-16S rRNA nuclease</fullName>
        <ecNumber evidence="1">3.1.-.-</ecNumber>
    </recommendedName>
</protein>
<evidence type="ECO:0000255" key="1">
    <source>
        <dbReference type="HAMAP-Rule" id="MF_00651"/>
    </source>
</evidence>
<evidence type="ECO:0000305" key="2"/>
<name>YQGF_STRA1</name>
<proteinExistence type="inferred from homology"/>
<accession>Q3JYN4</accession>